<gene>
    <name evidence="4" type="primary">asbE</name>
    <name evidence="6" type="ordered locus">GBAA_1985</name>
</gene>
<dbReference type="EC" id="2.3.2.-" evidence="3"/>
<dbReference type="EMBL" id="AE017334">
    <property type="protein sequence ID" value="AAT31104.1"/>
    <property type="molecule type" value="Genomic_DNA"/>
</dbReference>
<dbReference type="RefSeq" id="WP_000200715.1">
    <property type="nucleotide sequence ID" value="NZ_WXXJ01000029.1"/>
</dbReference>
<dbReference type="SMR" id="Q81RQ5"/>
<dbReference type="DNASU" id="1085949"/>
<dbReference type="GeneID" id="45021907"/>
<dbReference type="KEGG" id="bar:GBAA_1985"/>
<dbReference type="PATRIC" id="fig|1392.230.peg.1945"/>
<dbReference type="HOGENOM" id="CLU_052637_0_0_9"/>
<dbReference type="OMA" id="QNPFPHY"/>
<dbReference type="OrthoDB" id="177586at2"/>
<dbReference type="BioCyc" id="MetaCyc:MONOMER-14944"/>
<dbReference type="UniPathway" id="UPA01005"/>
<dbReference type="Proteomes" id="UP000000594">
    <property type="component" value="Chromosome"/>
</dbReference>
<dbReference type="GO" id="GO:0016746">
    <property type="term" value="F:acyltransferase activity"/>
    <property type="evidence" value="ECO:0007669"/>
    <property type="project" value="UniProtKB-KW"/>
</dbReference>
<dbReference type="InterPro" id="IPR046047">
    <property type="entry name" value="DUF6005"/>
</dbReference>
<dbReference type="Pfam" id="PF19468">
    <property type="entry name" value="DUF6005"/>
    <property type="match status" value="1"/>
</dbReference>
<comment type="function">
    <text evidence="1 2 3">Involved in the biosynthesis of petrobactin, a catecholate siderophore that functions in both iron acquisition and virulence (PubMed:17189355, PubMed:17346033, PubMed:22408253). Transfers the activated 3,4-dihydroxybenzoate (3,4-DHBA) moiety from 3,4-DHBA-loaded AsbD to different receipient molecules, including N-citryl-spermidine, N8,N'8-citryl-bis(spermidine) and N1-(3,4-dihydroxybenzoyl)-N8,N'8-citryl-bis(spermidine) (PubMed:22408253). Also catalyzes the transfer of the activated 3,4-DHBA moiety from 3,4-DHBA-loaded AsbD to spermidine to generate DHB-spermidine (DHB-SP) (PubMed:17346033).</text>
</comment>
<comment type="catalytic activity">
    <reaction evidence="3">
        <text>N(8)-citryl-spermidine + 3,4-dihydroxybenzoyl-[aryl-carrier protein] = N(1)-(3,4-dihydroxybenzoyl)-N(8)-citryl-spermidine + holo-[aryl-carrier protein] + H(+)</text>
        <dbReference type="Rhea" id="RHEA:64028"/>
        <dbReference type="Rhea" id="RHEA-COMP:15903"/>
        <dbReference type="Rhea" id="RHEA-COMP:15941"/>
        <dbReference type="ChEBI" id="CHEBI:15378"/>
        <dbReference type="ChEBI" id="CHEBI:64479"/>
        <dbReference type="ChEBI" id="CHEBI:144963"/>
        <dbReference type="ChEBI" id="CHEBI:149586"/>
        <dbReference type="ChEBI" id="CHEBI:149593"/>
    </reaction>
</comment>
<comment type="catalytic activity">
    <reaction evidence="3">
        <text>N(8),N'(8)-citryl-bis(spermidine) + 3,4-dihydroxybenzoyl-[aryl-carrier protein] = N(1)-(3,4-dihydroxybenzoyl)-N(8),N'(8)-citryl-bis(spermidine) + holo-[aryl-carrier protein] + H(+)</text>
        <dbReference type="Rhea" id="RHEA:64024"/>
        <dbReference type="Rhea" id="RHEA-COMP:15903"/>
        <dbReference type="Rhea" id="RHEA-COMP:15941"/>
        <dbReference type="ChEBI" id="CHEBI:15378"/>
        <dbReference type="ChEBI" id="CHEBI:64479"/>
        <dbReference type="ChEBI" id="CHEBI:144963"/>
        <dbReference type="ChEBI" id="CHEBI:149592"/>
        <dbReference type="ChEBI" id="CHEBI:149594"/>
    </reaction>
</comment>
<comment type="catalytic activity">
    <reaction evidence="3">
        <text>N(1)-(3,4-dihydroxybenzoyl)-N(8),N'(8)-citryl-bis(spermidine) + 3,4-dihydroxybenzoyl-[aryl-carrier protein] = petrobactin + holo-[aryl-carrier protein] + H(+)</text>
        <dbReference type="Rhea" id="RHEA:63820"/>
        <dbReference type="Rhea" id="RHEA-COMP:15903"/>
        <dbReference type="Rhea" id="RHEA-COMP:15941"/>
        <dbReference type="ChEBI" id="CHEBI:15378"/>
        <dbReference type="ChEBI" id="CHEBI:64479"/>
        <dbReference type="ChEBI" id="CHEBI:142778"/>
        <dbReference type="ChEBI" id="CHEBI:144963"/>
        <dbReference type="ChEBI" id="CHEBI:149594"/>
    </reaction>
</comment>
<comment type="pathway">
    <text evidence="1 2 3">Siderophore biosynthesis; petrobactin biosynthesis.</text>
</comment>
<comment type="disruption phenotype">
    <text evidence="1">The deletion mutant cannot produce petrobactin on iron-depleted medium. In vitro analysis show that mutants grow to a very limited extent as vegetative cells in iron-depleted medium but are not able to outgrow from spores under the same culture conditions.</text>
</comment>
<keyword id="KW-0012">Acyltransferase</keyword>
<keyword id="KW-1185">Reference proteome</keyword>
<keyword id="KW-0808">Transferase</keyword>
<name>ASBE_BACAN</name>
<reference key="1">
    <citation type="journal article" date="2009" name="J. Bacteriol.">
        <title>The complete genome sequence of Bacillus anthracis Ames 'Ancestor'.</title>
        <authorList>
            <person name="Ravel J."/>
            <person name="Jiang L."/>
            <person name="Stanley S.T."/>
            <person name="Wilson M.R."/>
            <person name="Decker R.S."/>
            <person name="Read T.D."/>
            <person name="Worsham P."/>
            <person name="Keim P.S."/>
            <person name="Salzberg S.L."/>
            <person name="Fraser-Liggett C.M."/>
            <person name="Rasko D.A."/>
        </authorList>
    </citation>
    <scope>NUCLEOTIDE SEQUENCE [LARGE SCALE GENOMIC DNA]</scope>
    <source>
        <strain>Ames ancestor</strain>
    </source>
</reference>
<reference key="2">
    <citation type="journal article" date="2007" name="J. Bacteriol.">
        <title>Biosynthetic analysis of the petrobactin siderophore pathway from Bacillus anthracis.</title>
        <authorList>
            <person name="Lee J.Y."/>
            <person name="Janes B.K."/>
            <person name="Passalacqua K.D."/>
            <person name="Pfleger B.F."/>
            <person name="Bergman N.H."/>
            <person name="Liu H."/>
            <person name="Haakansson K."/>
            <person name="Somu R.V."/>
            <person name="Aldrich C.C."/>
            <person name="Cendrowski S."/>
            <person name="Hanna P.C."/>
            <person name="Sherman D.H."/>
        </authorList>
    </citation>
    <scope>FUNCTION</scope>
    <scope>PATHWAY</scope>
    <scope>DISRUPTION PHENOTYPE</scope>
    <source>
        <strain>Sterne</strain>
    </source>
</reference>
<reference key="3">
    <citation type="journal article" date="2007" name="Biochemistry">
        <title>Characterization and analysis of early enzymes for petrobactin biosynthesis in Bacillus anthracis.</title>
        <authorList>
            <person name="Pfleger B.F."/>
            <person name="Lee J.Y."/>
            <person name="Somu R.V."/>
            <person name="Aldrich C.C."/>
            <person name="Hanna P.C."/>
            <person name="Sherman D.H."/>
        </authorList>
    </citation>
    <scope>FUNCTION</scope>
    <scope>PATHWAY</scope>
    <source>
        <strain>Sterne</strain>
    </source>
</reference>
<reference key="4">
    <citation type="journal article" date="2012" name="J. Biol. Chem.">
        <title>Functional and structural analysis of the siderophore synthetase AsbB through reconstitution of the petrobactin biosynthetic pathway from Bacillus anthracis.</title>
        <authorList>
            <person name="Nusca T.D."/>
            <person name="Kim Y."/>
            <person name="Maltseva N."/>
            <person name="Lee J.Y."/>
            <person name="Eschenfeldt W."/>
            <person name="Stols L."/>
            <person name="Schofield M.M."/>
            <person name="Scaglione J.B."/>
            <person name="Dixon S.D."/>
            <person name="Oves-Costales D."/>
            <person name="Challis G.L."/>
            <person name="Hanna P.C."/>
            <person name="Pfleger B.F."/>
            <person name="Joachimiak A."/>
            <person name="Sherman D.H."/>
        </authorList>
    </citation>
    <scope>FUNCTION</scope>
    <scope>CATALYTIC ACTIVITY</scope>
    <scope>PATHWAY</scope>
    <source>
        <strain>Sterne</strain>
    </source>
</reference>
<reference key="5">
    <citation type="journal article" date="2016" name="Mol. Microbiol.">
        <title>Flying under the radar: The non-canonical biochemistry and molecular biology of petrobactin from Bacillus anthracis.</title>
        <authorList>
            <person name="Hagan A.K."/>
            <person name="Carlson P.E. Jr."/>
            <person name="Hanna P.C."/>
        </authorList>
    </citation>
    <scope>REVIEW</scope>
</reference>
<organism>
    <name type="scientific">Bacillus anthracis</name>
    <dbReference type="NCBI Taxonomy" id="1392"/>
    <lineage>
        <taxon>Bacteria</taxon>
        <taxon>Bacillati</taxon>
        <taxon>Bacillota</taxon>
        <taxon>Bacilli</taxon>
        <taxon>Bacillales</taxon>
        <taxon>Bacillaceae</taxon>
        <taxon>Bacillus</taxon>
        <taxon>Bacillus cereus group</taxon>
    </lineage>
</organism>
<sequence length="327" mass="39032">MTSIKVHCLVSCFCEIIKRRSDIDFRPFYFGLWDGDFDITEGGIISYHSENINHDHYLLWYEKLYGMKVNEWYDHAKDKDSNVETFLQLVENKPENRYVIVMVDMSLLPERENKFHQKPFPHYLMISETEKEEEWFMLDPDFRWEGNMEREKVLYSVQDNPFGGGYFIDVEEIQEPTAEMVASYFIETFKRNDNELTMELKNLIIKMANEEEGYLLSGLVAAVKQIPVLAIRKYSYEHAFAYFRETLQYSEQEFDYWCDRVEDIVQGFTNVQYRAIKMAMTNNKGMLLSIVEKLDEMNAIELQIKTELERQFLSWKEMKSNESVLVF</sequence>
<accession>Q81RQ5</accession>
<accession>E9R8M9</accession>
<accession>Q6KTW1</accession>
<protein>
    <recommendedName>
        <fullName evidence="5">Petrobactin synthase</fullName>
        <ecNumber evidence="3">2.3.2.-</ecNumber>
    </recommendedName>
    <alternativeName>
        <fullName evidence="5">Petrobactin biosynthesis protein AsbE</fullName>
    </alternativeName>
</protein>
<evidence type="ECO:0000269" key="1">
    <source>
    </source>
</evidence>
<evidence type="ECO:0000269" key="2">
    <source>
    </source>
</evidence>
<evidence type="ECO:0000269" key="3">
    <source>
    </source>
</evidence>
<evidence type="ECO:0000303" key="4">
    <source>
    </source>
</evidence>
<evidence type="ECO:0000305" key="5"/>
<evidence type="ECO:0000312" key="6">
    <source>
        <dbReference type="EMBL" id="AAT31104.1"/>
    </source>
</evidence>
<proteinExistence type="evidence at protein level"/>
<feature type="chain" id="PRO_0000450625" description="Petrobactin synthase">
    <location>
        <begin position="1"/>
        <end position="327"/>
    </location>
</feature>